<name>ENO_WOLTR</name>
<keyword id="KW-0963">Cytoplasm</keyword>
<keyword id="KW-0324">Glycolysis</keyword>
<keyword id="KW-0456">Lyase</keyword>
<keyword id="KW-0460">Magnesium</keyword>
<keyword id="KW-0479">Metal-binding</keyword>
<keyword id="KW-1185">Reference proteome</keyword>
<keyword id="KW-0964">Secreted</keyword>
<comment type="function">
    <text evidence="1">Catalyzes the reversible conversion of 2-phosphoglycerate (2-PG) into phosphoenolpyruvate (PEP). It is essential for the degradation of carbohydrates via glycolysis.</text>
</comment>
<comment type="catalytic activity">
    <reaction evidence="1">
        <text>(2R)-2-phosphoglycerate = phosphoenolpyruvate + H2O</text>
        <dbReference type="Rhea" id="RHEA:10164"/>
        <dbReference type="ChEBI" id="CHEBI:15377"/>
        <dbReference type="ChEBI" id="CHEBI:58289"/>
        <dbReference type="ChEBI" id="CHEBI:58702"/>
        <dbReference type="EC" id="4.2.1.11"/>
    </reaction>
</comment>
<comment type="cofactor">
    <cofactor evidence="1">
        <name>Mg(2+)</name>
        <dbReference type="ChEBI" id="CHEBI:18420"/>
    </cofactor>
    <text evidence="1">Binds a second Mg(2+) ion via substrate during catalysis.</text>
</comment>
<comment type="pathway">
    <text evidence="1">Carbohydrate degradation; glycolysis; pyruvate from D-glyceraldehyde 3-phosphate: step 4/5.</text>
</comment>
<comment type="subcellular location">
    <subcellularLocation>
        <location evidence="1">Cytoplasm</location>
    </subcellularLocation>
    <subcellularLocation>
        <location evidence="1">Secreted</location>
    </subcellularLocation>
    <subcellularLocation>
        <location evidence="1">Cell surface</location>
    </subcellularLocation>
    <text evidence="1">Fractions of enolase are present in both the cytoplasm and on the cell surface.</text>
</comment>
<comment type="similarity">
    <text evidence="1">Belongs to the enolase family.</text>
</comment>
<organism>
    <name type="scientific">Wolbachia sp. subsp. Brugia malayi (strain TRS)</name>
    <dbReference type="NCBI Taxonomy" id="292805"/>
    <lineage>
        <taxon>Bacteria</taxon>
        <taxon>Pseudomonadati</taxon>
        <taxon>Pseudomonadota</taxon>
        <taxon>Alphaproteobacteria</taxon>
        <taxon>Rickettsiales</taxon>
        <taxon>Anaplasmataceae</taxon>
        <taxon>Wolbachieae</taxon>
        <taxon>Wolbachia</taxon>
    </lineage>
</organism>
<proteinExistence type="inferred from homology"/>
<feature type="chain" id="PRO_0000267134" description="Enolase">
    <location>
        <begin position="1"/>
        <end position="425"/>
    </location>
</feature>
<feature type="active site" description="Proton donor" evidence="1">
    <location>
        <position position="207"/>
    </location>
</feature>
<feature type="active site" description="Proton acceptor" evidence="1">
    <location>
        <position position="337"/>
    </location>
</feature>
<feature type="binding site" evidence="1">
    <location>
        <position position="165"/>
    </location>
    <ligand>
        <name>(2R)-2-phosphoglycerate</name>
        <dbReference type="ChEBI" id="CHEBI:58289"/>
    </ligand>
</feature>
<feature type="binding site" evidence="1">
    <location>
        <position position="244"/>
    </location>
    <ligand>
        <name>Mg(2+)</name>
        <dbReference type="ChEBI" id="CHEBI:18420"/>
    </ligand>
</feature>
<feature type="binding site" evidence="1">
    <location>
        <position position="285"/>
    </location>
    <ligand>
        <name>Mg(2+)</name>
        <dbReference type="ChEBI" id="CHEBI:18420"/>
    </ligand>
</feature>
<feature type="binding site" evidence="1">
    <location>
        <position position="312"/>
    </location>
    <ligand>
        <name>Mg(2+)</name>
        <dbReference type="ChEBI" id="CHEBI:18420"/>
    </ligand>
</feature>
<feature type="binding site" evidence="1">
    <location>
        <position position="337"/>
    </location>
    <ligand>
        <name>(2R)-2-phosphoglycerate</name>
        <dbReference type="ChEBI" id="CHEBI:58289"/>
    </ligand>
</feature>
<feature type="binding site" evidence="1">
    <location>
        <position position="366"/>
    </location>
    <ligand>
        <name>(2R)-2-phosphoglycerate</name>
        <dbReference type="ChEBI" id="CHEBI:58289"/>
    </ligand>
</feature>
<feature type="binding site" evidence="1">
    <location>
        <position position="367"/>
    </location>
    <ligand>
        <name>(2R)-2-phosphoglycerate</name>
        <dbReference type="ChEBI" id="CHEBI:58289"/>
    </ligand>
</feature>
<feature type="binding site" evidence="1">
    <location>
        <position position="388"/>
    </location>
    <ligand>
        <name>(2R)-2-phosphoglycerate</name>
        <dbReference type="ChEBI" id="CHEBI:58289"/>
    </ligand>
</feature>
<dbReference type="EC" id="4.2.1.11" evidence="1"/>
<dbReference type="EMBL" id="AE017321">
    <property type="protein sequence ID" value="AAW70710.1"/>
    <property type="molecule type" value="Genomic_DNA"/>
</dbReference>
<dbReference type="RefSeq" id="WP_011256320.1">
    <property type="nucleotide sequence ID" value="NC_006833.1"/>
</dbReference>
<dbReference type="SMR" id="Q5GTG4"/>
<dbReference type="STRING" id="292805.Wbm0119"/>
<dbReference type="KEGG" id="wbm:Wbm0119"/>
<dbReference type="eggNOG" id="COG0148">
    <property type="taxonomic scope" value="Bacteria"/>
</dbReference>
<dbReference type="HOGENOM" id="CLU_031223_2_1_5"/>
<dbReference type="UniPathway" id="UPA00109">
    <property type="reaction ID" value="UER00187"/>
</dbReference>
<dbReference type="Proteomes" id="UP000000534">
    <property type="component" value="Chromosome"/>
</dbReference>
<dbReference type="GO" id="GO:0009986">
    <property type="term" value="C:cell surface"/>
    <property type="evidence" value="ECO:0007669"/>
    <property type="project" value="UniProtKB-SubCell"/>
</dbReference>
<dbReference type="GO" id="GO:0005576">
    <property type="term" value="C:extracellular region"/>
    <property type="evidence" value="ECO:0007669"/>
    <property type="project" value="UniProtKB-SubCell"/>
</dbReference>
<dbReference type="GO" id="GO:0000015">
    <property type="term" value="C:phosphopyruvate hydratase complex"/>
    <property type="evidence" value="ECO:0007669"/>
    <property type="project" value="InterPro"/>
</dbReference>
<dbReference type="GO" id="GO:0000287">
    <property type="term" value="F:magnesium ion binding"/>
    <property type="evidence" value="ECO:0007669"/>
    <property type="project" value="UniProtKB-UniRule"/>
</dbReference>
<dbReference type="GO" id="GO:0004634">
    <property type="term" value="F:phosphopyruvate hydratase activity"/>
    <property type="evidence" value="ECO:0007669"/>
    <property type="project" value="UniProtKB-UniRule"/>
</dbReference>
<dbReference type="GO" id="GO:0006096">
    <property type="term" value="P:glycolytic process"/>
    <property type="evidence" value="ECO:0007669"/>
    <property type="project" value="UniProtKB-UniRule"/>
</dbReference>
<dbReference type="CDD" id="cd03313">
    <property type="entry name" value="enolase"/>
    <property type="match status" value="1"/>
</dbReference>
<dbReference type="FunFam" id="3.30.390.10:FF:000001">
    <property type="entry name" value="Enolase"/>
    <property type="match status" value="1"/>
</dbReference>
<dbReference type="Gene3D" id="3.20.20.120">
    <property type="entry name" value="Enolase-like C-terminal domain"/>
    <property type="match status" value="1"/>
</dbReference>
<dbReference type="Gene3D" id="3.30.390.10">
    <property type="entry name" value="Enolase-like, N-terminal domain"/>
    <property type="match status" value="1"/>
</dbReference>
<dbReference type="HAMAP" id="MF_00318">
    <property type="entry name" value="Enolase"/>
    <property type="match status" value="1"/>
</dbReference>
<dbReference type="InterPro" id="IPR000941">
    <property type="entry name" value="Enolase"/>
</dbReference>
<dbReference type="InterPro" id="IPR036849">
    <property type="entry name" value="Enolase-like_C_sf"/>
</dbReference>
<dbReference type="InterPro" id="IPR029017">
    <property type="entry name" value="Enolase-like_N"/>
</dbReference>
<dbReference type="InterPro" id="IPR020810">
    <property type="entry name" value="Enolase_C"/>
</dbReference>
<dbReference type="InterPro" id="IPR020809">
    <property type="entry name" value="Enolase_CS"/>
</dbReference>
<dbReference type="InterPro" id="IPR020811">
    <property type="entry name" value="Enolase_N"/>
</dbReference>
<dbReference type="NCBIfam" id="TIGR01060">
    <property type="entry name" value="eno"/>
    <property type="match status" value="1"/>
</dbReference>
<dbReference type="PANTHER" id="PTHR11902">
    <property type="entry name" value="ENOLASE"/>
    <property type="match status" value="1"/>
</dbReference>
<dbReference type="PANTHER" id="PTHR11902:SF1">
    <property type="entry name" value="ENOLASE"/>
    <property type="match status" value="1"/>
</dbReference>
<dbReference type="Pfam" id="PF00113">
    <property type="entry name" value="Enolase_C"/>
    <property type="match status" value="1"/>
</dbReference>
<dbReference type="Pfam" id="PF03952">
    <property type="entry name" value="Enolase_N"/>
    <property type="match status" value="1"/>
</dbReference>
<dbReference type="PIRSF" id="PIRSF001400">
    <property type="entry name" value="Enolase"/>
    <property type="match status" value="1"/>
</dbReference>
<dbReference type="PRINTS" id="PR00148">
    <property type="entry name" value="ENOLASE"/>
</dbReference>
<dbReference type="SFLD" id="SFLDS00001">
    <property type="entry name" value="Enolase"/>
    <property type="match status" value="1"/>
</dbReference>
<dbReference type="SFLD" id="SFLDF00002">
    <property type="entry name" value="enolase"/>
    <property type="match status" value="1"/>
</dbReference>
<dbReference type="SMART" id="SM01192">
    <property type="entry name" value="Enolase_C"/>
    <property type="match status" value="1"/>
</dbReference>
<dbReference type="SMART" id="SM01193">
    <property type="entry name" value="Enolase_N"/>
    <property type="match status" value="1"/>
</dbReference>
<dbReference type="SUPFAM" id="SSF51604">
    <property type="entry name" value="Enolase C-terminal domain-like"/>
    <property type="match status" value="1"/>
</dbReference>
<dbReference type="SUPFAM" id="SSF54826">
    <property type="entry name" value="Enolase N-terminal domain-like"/>
    <property type="match status" value="1"/>
</dbReference>
<dbReference type="PROSITE" id="PS00164">
    <property type="entry name" value="ENOLASE"/>
    <property type="match status" value="1"/>
</dbReference>
<accession>Q5GTG4</accession>
<evidence type="ECO:0000255" key="1">
    <source>
        <dbReference type="HAMAP-Rule" id="MF_00318"/>
    </source>
</evidence>
<reference key="1">
    <citation type="journal article" date="2005" name="PLoS Biol.">
        <title>The Wolbachia genome of Brugia malayi: endosymbiont evolution within a human pathogenic nematode.</title>
        <authorList>
            <person name="Foster J."/>
            <person name="Ganatra M."/>
            <person name="Kamal I."/>
            <person name="Ware J."/>
            <person name="Makarova K."/>
            <person name="Ivanova N."/>
            <person name="Bhattacharyya A."/>
            <person name="Kapatral V."/>
            <person name="Kumar S."/>
            <person name="Posfai J."/>
            <person name="Vincze T."/>
            <person name="Ingram J."/>
            <person name="Moran L."/>
            <person name="Lapidus A."/>
            <person name="Omelchenko M."/>
            <person name="Kyrpides N."/>
            <person name="Ghedin E."/>
            <person name="Wang S."/>
            <person name="Goltsman E."/>
            <person name="Joukov V."/>
            <person name="Ostrovskaya O."/>
            <person name="Tsukerman K."/>
            <person name="Mazur M."/>
            <person name="Comb D."/>
            <person name="Koonin E."/>
            <person name="Slatko B."/>
        </authorList>
    </citation>
    <scope>NUCLEOTIDE SEQUENCE [LARGE SCALE GENOMIC DNA]</scope>
    <source>
        <strain>TRS</strain>
    </source>
</reference>
<protein>
    <recommendedName>
        <fullName evidence="1">Enolase</fullName>
        <ecNumber evidence="1">4.2.1.11</ecNumber>
    </recommendedName>
    <alternativeName>
        <fullName evidence="1">2-phospho-D-glycerate hydro-lyase</fullName>
    </alternativeName>
    <alternativeName>
        <fullName evidence="1">2-phosphoglycerate dehydratase</fullName>
    </alternativeName>
</protein>
<gene>
    <name evidence="1" type="primary">eno</name>
    <name type="ordered locus">Wbm0119</name>
</gene>
<sequence>MTKRIINNVFAREILDSRGYPTVEVEIELCDGATGRASVPSGASTGKLEALELRDQDEKRYCGKGVLKAVKAVNGVIANAIIGMDAADQSTIDKALIELDGTRNKSKLGANATLGVSLASAKAAANSFKMPLYRYLGGEQANVMPFPLINIINGGVHADNKLDFQEFMILPIGAEAFSEAIRMSAEVFHNLRSILRKRGYSTNVGDEGGFAPNIESTEEALDLIVHAIESASYSTQNHFALGLDVASSTFYKNKIYKFANKELTSEELVEYYYNLVEKYPITSMEDAMSEDDYEGWKLLTAKLGSKVQLVGDDLFVTNCELIRKGIEEKMANAVLIKPNQIGTLTETFTAIGMTKSGGYKAVISHRSGETEDTTISHIAIASNCGQIKTGSLSRSDRLAKYNELIRIEGTLERNAKYYYGLAWTS</sequence>